<gene>
    <name type="primary">IL15</name>
</gene>
<reference key="1">
    <citation type="journal article" date="2005" name="Cytokine">
        <title>Molecular characterization of woodchuck interleukin 15 (wIL-15) and detection of its expression in liver samples of woodchucks infected with woodchuck hepatitis virus (WHV).</title>
        <authorList>
            <person name="Wang B."/>
            <person name="Lohrengel B."/>
            <person name="Lu Y."/>
            <person name="Meng Z."/>
            <person name="Xu Y."/>
            <person name="Yang D."/>
            <person name="Roggendorf M."/>
            <person name="Lu M."/>
        </authorList>
    </citation>
    <scope>NUCLEOTIDE SEQUENCE [MRNA]</scope>
</reference>
<reference key="2">
    <citation type="submission" date="2005-01" db="EMBL/GenBank/DDBJ databases">
        <title>Molecular and functional characterization of woodchuck IL-15.</title>
        <authorList>
            <person name="Berraondo P."/>
            <person name="Ochoa L."/>
            <person name="Crettaz J."/>
            <person name="Prieto J."/>
            <person name="Gonzalez-Aseguinolaza G."/>
        </authorList>
    </citation>
    <scope>NUCLEOTIDE SEQUENCE [MRNA]</scope>
</reference>
<sequence length="162" mass="18363">MRISKPHLRITSIQCYVCLLLNTHFLTEAGIRVFILGCISAGIPKTEANWEDVRKDLQKIENLIQSLHMDATLYTESDVHPRCKVTAMNCFLLELEVISHESRDGDIEETVKNLILLANSSLSSNGNITESGCKVCEELEEKNITEFLESFKHIVQMFINPP</sequence>
<proteinExistence type="evidence at transcript level"/>
<keyword id="KW-0202">Cytokine</keyword>
<keyword id="KW-1015">Disulfide bond</keyword>
<keyword id="KW-0325">Glycoprotein</keyword>
<keyword id="KW-0964">Secreted</keyword>
<keyword id="KW-0732">Signal</keyword>
<accession>Q5WQV8</accession>
<accession>Q5EEK6</accession>
<name>IL15_MARMO</name>
<organism>
    <name type="scientific">Marmota monax</name>
    <name type="common">Woodchuck</name>
    <dbReference type="NCBI Taxonomy" id="9995"/>
    <lineage>
        <taxon>Eukaryota</taxon>
        <taxon>Metazoa</taxon>
        <taxon>Chordata</taxon>
        <taxon>Craniata</taxon>
        <taxon>Vertebrata</taxon>
        <taxon>Euteleostomi</taxon>
        <taxon>Mammalia</taxon>
        <taxon>Eutheria</taxon>
        <taxon>Euarchontoglires</taxon>
        <taxon>Glires</taxon>
        <taxon>Rodentia</taxon>
        <taxon>Sciuromorpha</taxon>
        <taxon>Sciuridae</taxon>
        <taxon>Xerinae</taxon>
        <taxon>Marmotini</taxon>
        <taxon>Marmota</taxon>
    </lineage>
</organism>
<feature type="signal peptide" evidence="4">
    <location>
        <begin position="1"/>
        <end position="29"/>
    </location>
</feature>
<feature type="propeptide" id="PRO_0000358330" evidence="4">
    <location>
        <begin position="30"/>
        <end position="48"/>
    </location>
</feature>
<feature type="chain" id="PRO_5000092329" description="Interleukin-15">
    <location>
        <begin position="49"/>
        <end position="162"/>
    </location>
</feature>
<feature type="glycosylation site" description="N-linked (GlcNAc...) asparagine" evidence="4">
    <location>
        <position position="119"/>
    </location>
</feature>
<feature type="glycosylation site" description="N-linked (GlcNAc...) asparagine" evidence="4">
    <location>
        <position position="127"/>
    </location>
</feature>
<feature type="glycosylation site" description="N-linked (GlcNAc...) asparagine" evidence="4">
    <location>
        <position position="143"/>
    </location>
</feature>
<feature type="disulfide bond" evidence="1">
    <location>
        <begin position="83"/>
        <end position="133"/>
    </location>
</feature>
<feature type="disulfide bond" evidence="1">
    <location>
        <begin position="90"/>
        <end position="136"/>
    </location>
</feature>
<feature type="sequence conflict" description="In Ref. 2; AAW82751." evidence="5" ref="2">
    <original>G</original>
    <variation>S</variation>
    <location>
        <position position="42"/>
    </location>
</feature>
<feature type="sequence conflict" description="In Ref. 2; AAW82751." evidence="5" ref="2">
    <original>K</original>
    <variation>R</variation>
    <location>
        <position position="55"/>
    </location>
</feature>
<dbReference type="EMBL" id="AY426605">
    <property type="protein sequence ID" value="AAR83922.1"/>
    <property type="molecule type" value="mRNA"/>
</dbReference>
<dbReference type="EMBL" id="AY900230">
    <property type="protein sequence ID" value="AAW82751.1"/>
    <property type="molecule type" value="mRNA"/>
</dbReference>
<dbReference type="SMR" id="Q5WQV8"/>
<dbReference type="GlyCosmos" id="Q5WQV8">
    <property type="glycosylation" value="3 sites, No reported glycans"/>
</dbReference>
<dbReference type="GO" id="GO:0005615">
    <property type="term" value="C:extracellular space"/>
    <property type="evidence" value="ECO:0007669"/>
    <property type="project" value="UniProtKB-KW"/>
</dbReference>
<dbReference type="GO" id="GO:0005125">
    <property type="term" value="F:cytokine activity"/>
    <property type="evidence" value="ECO:0007669"/>
    <property type="project" value="UniProtKB-KW"/>
</dbReference>
<dbReference type="GO" id="GO:0005126">
    <property type="term" value="F:cytokine receptor binding"/>
    <property type="evidence" value="ECO:0007669"/>
    <property type="project" value="InterPro"/>
</dbReference>
<dbReference type="GO" id="GO:0006955">
    <property type="term" value="P:immune response"/>
    <property type="evidence" value="ECO:0007669"/>
    <property type="project" value="InterPro"/>
</dbReference>
<dbReference type="GO" id="GO:0035723">
    <property type="term" value="P:interleukin-15-mediated signaling pathway"/>
    <property type="evidence" value="ECO:0000250"/>
    <property type="project" value="UniProtKB"/>
</dbReference>
<dbReference type="GO" id="GO:0042119">
    <property type="term" value="P:neutrophil activation"/>
    <property type="evidence" value="ECO:0000250"/>
    <property type="project" value="UniProtKB"/>
</dbReference>
<dbReference type="GO" id="GO:0001819">
    <property type="term" value="P:positive regulation of cytokine production"/>
    <property type="evidence" value="ECO:0007669"/>
    <property type="project" value="TreeGrafter"/>
</dbReference>
<dbReference type="GO" id="GO:0050778">
    <property type="term" value="P:positive regulation of immune response"/>
    <property type="evidence" value="ECO:0007669"/>
    <property type="project" value="TreeGrafter"/>
</dbReference>
<dbReference type="GO" id="GO:0050731">
    <property type="term" value="P:positive regulation of peptidyl-tyrosine phosphorylation"/>
    <property type="evidence" value="ECO:0000250"/>
    <property type="project" value="UniProtKB"/>
</dbReference>
<dbReference type="GO" id="GO:0050766">
    <property type="term" value="P:positive regulation of phagocytosis"/>
    <property type="evidence" value="ECO:0000250"/>
    <property type="project" value="UniProtKB"/>
</dbReference>
<dbReference type="GO" id="GO:0042102">
    <property type="term" value="P:positive regulation of T cell proliferation"/>
    <property type="evidence" value="ECO:0007669"/>
    <property type="project" value="TreeGrafter"/>
</dbReference>
<dbReference type="FunFam" id="1.20.1250.70:FF:000001">
    <property type="entry name" value="Interleukin"/>
    <property type="match status" value="1"/>
</dbReference>
<dbReference type="Gene3D" id="1.20.1250.70">
    <property type="entry name" value="Interleukin-15/Interleukin-21"/>
    <property type="match status" value="1"/>
</dbReference>
<dbReference type="InterPro" id="IPR009079">
    <property type="entry name" value="4_helix_cytokine-like_core"/>
</dbReference>
<dbReference type="InterPro" id="IPR020439">
    <property type="entry name" value="IL-15"/>
</dbReference>
<dbReference type="InterPro" id="IPR003443">
    <property type="entry name" value="IL-15/IL-21_fam"/>
</dbReference>
<dbReference type="InterPro" id="IPR020466">
    <property type="entry name" value="IL-15_mml"/>
</dbReference>
<dbReference type="PANTHER" id="PTHR14356:SF3">
    <property type="entry name" value="INTERLEUKIN-15"/>
    <property type="match status" value="1"/>
</dbReference>
<dbReference type="PANTHER" id="PTHR14356">
    <property type="entry name" value="INTERLEUKIN-15-RELATED"/>
    <property type="match status" value="1"/>
</dbReference>
<dbReference type="Pfam" id="PF02372">
    <property type="entry name" value="IL15"/>
    <property type="match status" value="1"/>
</dbReference>
<dbReference type="PRINTS" id="PR01947">
    <property type="entry name" value="INTLKN15MAML"/>
</dbReference>
<dbReference type="PRINTS" id="PR01930">
    <property type="entry name" value="INTRLEUKIN15"/>
</dbReference>
<dbReference type="SUPFAM" id="SSF47266">
    <property type="entry name" value="4-helical cytokines"/>
    <property type="match status" value="1"/>
</dbReference>
<comment type="function">
    <text evidence="2 3">Cytokine that plays a major role in the development of inflammatory and protective immune responses to microbial invaders and parasites by modulating immune cells of both the innate and adaptive immune systems. Stimulates the proliferation of natural killer cells, T-cells and B-cells and promotes the secretion of several cytokines. In monocytes, induces the production of IL8 and monocyte chemotactic protein 1/CCL2, two chemokines that attract neutrophils and monocytes respectively to sites of infection. Unlike most cytokines, which are secreted in soluble form, IL15 is expressed in association with its high affinity IL15RA on the surface of IL15-producing cells and delivers signals to target cells that express IL2RB and IL2RG receptor subunits. Binding to its receptor triggers the phosphorylation of JAK1 and JAK3 and the recruitment and subsequent phosphorylation of signal transducer and activator of transcription-3/STAT3 and STAT5 (By similarity). In mast cells, induces the rapid tyrosine phosphorylation of STAT6 and thereby controls mast cell survival and release of cytokines such as IL4 (By similarity).</text>
</comment>
<comment type="subcellular location">
    <subcellularLocation>
        <location>Secreted</location>
    </subcellularLocation>
</comment>
<comment type="similarity">
    <text evidence="5">Belongs to the IL-15/IL-21 family.</text>
</comment>
<protein>
    <recommendedName>
        <fullName>Interleukin-15</fullName>
        <shortName>IL-15</shortName>
    </recommendedName>
</protein>
<evidence type="ECO:0000250" key="1"/>
<evidence type="ECO:0000250" key="2">
    <source>
        <dbReference type="UniProtKB" id="P40933"/>
    </source>
</evidence>
<evidence type="ECO:0000250" key="3">
    <source>
        <dbReference type="UniProtKB" id="P48346"/>
    </source>
</evidence>
<evidence type="ECO:0000255" key="4"/>
<evidence type="ECO:0000305" key="5"/>